<feature type="chain" id="PRO_0000393569" description="Glucosamine 6-phosphate N-acetyltransferase 1">
    <location>
        <begin position="1"/>
        <end position="157"/>
    </location>
</feature>
<feature type="domain" description="N-acetyltransferase" evidence="2">
    <location>
        <begin position="9"/>
        <end position="157"/>
    </location>
</feature>
<feature type="binding site" evidence="1">
    <location>
        <position position="31"/>
    </location>
    <ligand>
        <name>substrate</name>
    </ligand>
</feature>
<feature type="binding site" evidence="1">
    <location>
        <begin position="78"/>
        <end position="81"/>
    </location>
    <ligand>
        <name>substrate</name>
    </ligand>
</feature>
<feature type="binding site" evidence="1">
    <location>
        <begin position="90"/>
        <end position="92"/>
    </location>
    <ligand>
        <name>substrate</name>
    </ligand>
</feature>
<feature type="binding site" evidence="1">
    <location>
        <begin position="100"/>
        <end position="105"/>
    </location>
    <ligand>
        <name>acetyl-CoA</name>
        <dbReference type="ChEBI" id="CHEBI:57288"/>
    </ligand>
</feature>
<feature type="binding site" evidence="1">
    <location>
        <begin position="121"/>
        <end position="122"/>
    </location>
    <ligand>
        <name>substrate</name>
    </ligand>
</feature>
<feature type="binding site" evidence="1">
    <location>
        <begin position="135"/>
        <end position="137"/>
    </location>
    <ligand>
        <name>acetyl-CoA</name>
        <dbReference type="ChEBI" id="CHEBI:57288"/>
    </ligand>
</feature>
<keyword id="KW-0012">Acyltransferase</keyword>
<keyword id="KW-1185">Reference proteome</keyword>
<keyword id="KW-0808">Transferase</keyword>
<organism>
    <name type="scientific">Dictyostelium discoideum</name>
    <name type="common">Social amoeba</name>
    <dbReference type="NCBI Taxonomy" id="44689"/>
    <lineage>
        <taxon>Eukaryota</taxon>
        <taxon>Amoebozoa</taxon>
        <taxon>Evosea</taxon>
        <taxon>Eumycetozoa</taxon>
        <taxon>Dictyostelia</taxon>
        <taxon>Dictyosteliales</taxon>
        <taxon>Dictyosteliaceae</taxon>
        <taxon>Dictyostelium</taxon>
    </lineage>
</organism>
<proteinExistence type="inferred from homology"/>
<reference key="1">
    <citation type="journal article" date="2005" name="Nature">
        <title>The genome of the social amoeba Dictyostelium discoideum.</title>
        <authorList>
            <person name="Eichinger L."/>
            <person name="Pachebat J.A."/>
            <person name="Gloeckner G."/>
            <person name="Rajandream M.A."/>
            <person name="Sucgang R."/>
            <person name="Berriman M."/>
            <person name="Song J."/>
            <person name="Olsen R."/>
            <person name="Szafranski K."/>
            <person name="Xu Q."/>
            <person name="Tunggal B."/>
            <person name="Kummerfeld S."/>
            <person name="Madera M."/>
            <person name="Konfortov B.A."/>
            <person name="Rivero F."/>
            <person name="Bankier A.T."/>
            <person name="Lehmann R."/>
            <person name="Hamlin N."/>
            <person name="Davies R."/>
            <person name="Gaudet P."/>
            <person name="Fey P."/>
            <person name="Pilcher K."/>
            <person name="Chen G."/>
            <person name="Saunders D."/>
            <person name="Sodergren E.J."/>
            <person name="Davis P."/>
            <person name="Kerhornou A."/>
            <person name="Nie X."/>
            <person name="Hall N."/>
            <person name="Anjard C."/>
            <person name="Hemphill L."/>
            <person name="Bason N."/>
            <person name="Farbrother P."/>
            <person name="Desany B."/>
            <person name="Just E."/>
            <person name="Morio T."/>
            <person name="Rost R."/>
            <person name="Churcher C.M."/>
            <person name="Cooper J."/>
            <person name="Haydock S."/>
            <person name="van Driessche N."/>
            <person name="Cronin A."/>
            <person name="Goodhead I."/>
            <person name="Muzny D.M."/>
            <person name="Mourier T."/>
            <person name="Pain A."/>
            <person name="Lu M."/>
            <person name="Harper D."/>
            <person name="Lindsay R."/>
            <person name="Hauser H."/>
            <person name="James K.D."/>
            <person name="Quiles M."/>
            <person name="Madan Babu M."/>
            <person name="Saito T."/>
            <person name="Buchrieser C."/>
            <person name="Wardroper A."/>
            <person name="Felder M."/>
            <person name="Thangavelu M."/>
            <person name="Johnson D."/>
            <person name="Knights A."/>
            <person name="Loulseged H."/>
            <person name="Mungall K.L."/>
            <person name="Oliver K."/>
            <person name="Price C."/>
            <person name="Quail M.A."/>
            <person name="Urushihara H."/>
            <person name="Hernandez J."/>
            <person name="Rabbinowitsch E."/>
            <person name="Steffen D."/>
            <person name="Sanders M."/>
            <person name="Ma J."/>
            <person name="Kohara Y."/>
            <person name="Sharp S."/>
            <person name="Simmonds M.N."/>
            <person name="Spiegler S."/>
            <person name="Tivey A."/>
            <person name="Sugano S."/>
            <person name="White B."/>
            <person name="Walker D."/>
            <person name="Woodward J.R."/>
            <person name="Winckler T."/>
            <person name="Tanaka Y."/>
            <person name="Shaulsky G."/>
            <person name="Schleicher M."/>
            <person name="Weinstock G.M."/>
            <person name="Rosenthal A."/>
            <person name="Cox E.C."/>
            <person name="Chisholm R.L."/>
            <person name="Gibbs R.A."/>
            <person name="Loomis W.F."/>
            <person name="Platzer M."/>
            <person name="Kay R.R."/>
            <person name="Williams J.G."/>
            <person name="Dear P.H."/>
            <person name="Noegel A.A."/>
            <person name="Barrell B.G."/>
            <person name="Kuspa A."/>
        </authorList>
    </citation>
    <scope>NUCLEOTIDE SEQUENCE [LARGE SCALE GENOMIC DNA]</scope>
    <source>
        <strain>AX4</strain>
    </source>
</reference>
<evidence type="ECO:0000250" key="1">
    <source>
        <dbReference type="UniProtKB" id="Q96EK6"/>
    </source>
</evidence>
<evidence type="ECO:0000255" key="2">
    <source>
        <dbReference type="PROSITE-ProRule" id="PRU00532"/>
    </source>
</evidence>
<evidence type="ECO:0000305" key="3"/>
<name>GNA1_DICDI</name>
<dbReference type="EC" id="2.3.1.4" evidence="1"/>
<dbReference type="EMBL" id="AAFI02000031">
    <property type="protein sequence ID" value="EAL67676.1"/>
    <property type="molecule type" value="Genomic_DNA"/>
</dbReference>
<dbReference type="RefSeq" id="XP_641649.1">
    <property type="nucleotide sequence ID" value="XM_636557.1"/>
</dbReference>
<dbReference type="SMR" id="Q54WR8"/>
<dbReference type="FunCoup" id="Q54WR8">
    <property type="interactions" value="310"/>
</dbReference>
<dbReference type="STRING" id="44689.Q54WR8"/>
<dbReference type="PaxDb" id="44689-DDB0304953"/>
<dbReference type="EnsemblProtists" id="EAL67676">
    <property type="protein sequence ID" value="EAL67676"/>
    <property type="gene ID" value="DDB_G0279475"/>
</dbReference>
<dbReference type="GeneID" id="8622056"/>
<dbReference type="KEGG" id="ddi:DDB_G0279475"/>
<dbReference type="dictyBase" id="DDB_G0279475">
    <property type="gene designation" value="gna1"/>
</dbReference>
<dbReference type="VEuPathDB" id="AmoebaDB:DDB_G0279475"/>
<dbReference type="eggNOG" id="KOG3396">
    <property type="taxonomic scope" value="Eukaryota"/>
</dbReference>
<dbReference type="HOGENOM" id="CLU_072095_0_1_1"/>
<dbReference type="InParanoid" id="Q54WR8"/>
<dbReference type="OMA" id="NQRYDWI"/>
<dbReference type="PhylomeDB" id="Q54WR8"/>
<dbReference type="Reactome" id="R-DDI-446210">
    <property type="pathway name" value="Synthesis of UDP-N-acetyl-glucosamine"/>
</dbReference>
<dbReference type="UniPathway" id="UPA00113">
    <property type="reaction ID" value="UER00529"/>
</dbReference>
<dbReference type="PRO" id="PR:Q54WR8"/>
<dbReference type="Proteomes" id="UP000002195">
    <property type="component" value="Chromosome 3"/>
</dbReference>
<dbReference type="GO" id="GO:0004343">
    <property type="term" value="F:glucosamine 6-phosphate N-acetyltransferase activity"/>
    <property type="evidence" value="ECO:0000250"/>
    <property type="project" value="dictyBase"/>
</dbReference>
<dbReference type="GO" id="GO:0006048">
    <property type="term" value="P:UDP-N-acetylglucosamine biosynthetic process"/>
    <property type="evidence" value="ECO:0000250"/>
    <property type="project" value="dictyBase"/>
</dbReference>
<dbReference type="CDD" id="cd04301">
    <property type="entry name" value="NAT_SF"/>
    <property type="match status" value="1"/>
</dbReference>
<dbReference type="FunFam" id="3.40.630.30:FF:000136">
    <property type="entry name" value="Glucosamine 6-phosphate N-acetyltransferase"/>
    <property type="match status" value="1"/>
</dbReference>
<dbReference type="Gene3D" id="3.40.630.30">
    <property type="match status" value="1"/>
</dbReference>
<dbReference type="InterPro" id="IPR016181">
    <property type="entry name" value="Acyl_CoA_acyltransferase"/>
</dbReference>
<dbReference type="InterPro" id="IPR000182">
    <property type="entry name" value="GNAT_dom"/>
</dbReference>
<dbReference type="InterPro" id="IPR039143">
    <property type="entry name" value="GNPNAT1-like"/>
</dbReference>
<dbReference type="PANTHER" id="PTHR13355">
    <property type="entry name" value="GLUCOSAMINE 6-PHOSPHATE N-ACETYLTRANSFERASE"/>
    <property type="match status" value="1"/>
</dbReference>
<dbReference type="PANTHER" id="PTHR13355:SF11">
    <property type="entry name" value="GLUCOSAMINE 6-PHOSPHATE N-ACETYLTRANSFERASE"/>
    <property type="match status" value="1"/>
</dbReference>
<dbReference type="Pfam" id="PF00583">
    <property type="entry name" value="Acetyltransf_1"/>
    <property type="match status" value="1"/>
</dbReference>
<dbReference type="SUPFAM" id="SSF55729">
    <property type="entry name" value="Acyl-CoA N-acyltransferases (Nat)"/>
    <property type="match status" value="1"/>
</dbReference>
<dbReference type="PROSITE" id="PS51186">
    <property type="entry name" value="GNAT"/>
    <property type="match status" value="1"/>
</dbReference>
<gene>
    <name type="primary">gna1</name>
    <name type="ORF">DDB_G0279475</name>
</gene>
<comment type="catalytic activity">
    <reaction evidence="1">
        <text>D-glucosamine 6-phosphate + acetyl-CoA = N-acetyl-D-glucosamine 6-phosphate + CoA + H(+)</text>
        <dbReference type="Rhea" id="RHEA:10292"/>
        <dbReference type="ChEBI" id="CHEBI:15378"/>
        <dbReference type="ChEBI" id="CHEBI:57287"/>
        <dbReference type="ChEBI" id="CHEBI:57288"/>
        <dbReference type="ChEBI" id="CHEBI:57513"/>
        <dbReference type="ChEBI" id="CHEBI:58725"/>
        <dbReference type="EC" id="2.3.1.4"/>
    </reaction>
</comment>
<comment type="pathway">
    <text>Nucleotide-sugar biosynthesis; UDP-N-acetyl-alpha-D-glucosamine biosynthesis; N-acetyl-alpha-D-glucosamine 1-phosphate from alpha-D-glucosamine 6-phosphate (route I): step 1/2.</text>
</comment>
<comment type="similarity">
    <text evidence="3">Belongs to the acetyltransferase family. GNA1 subfamily.</text>
</comment>
<sequence length="157" mass="17994">MSSIVDDGISFRPLDIDDFDKGYSECLQQLTEAKFTKEQFIERFNQIKKQSDTYFLIVAVDVKLNKIIACGSLFVEKKFIRNCGKCGHIEDIVVNNNYRGKNLGLRIIEQLKCIGSQAGCYKIILDCSEANVKFYEKCKFERKGVQMSIYLPTPPKL</sequence>
<protein>
    <recommendedName>
        <fullName>Glucosamine 6-phosphate N-acetyltransferase 1</fullName>
        <shortName>GNPNAT1</shortName>
        <ecNumber evidence="1">2.3.1.4</ecNumber>
    </recommendedName>
</protein>
<accession>Q54WR8</accession>